<organism>
    <name type="scientific">Rhizobium etli (strain ATCC 51251 / DSM 11541 / JCM 21823 / NBRC 15573 / CFN 42)</name>
    <dbReference type="NCBI Taxonomy" id="347834"/>
    <lineage>
        <taxon>Bacteria</taxon>
        <taxon>Pseudomonadati</taxon>
        <taxon>Pseudomonadota</taxon>
        <taxon>Alphaproteobacteria</taxon>
        <taxon>Hyphomicrobiales</taxon>
        <taxon>Rhizobiaceae</taxon>
        <taxon>Rhizobium/Agrobacterium group</taxon>
        <taxon>Rhizobium</taxon>
    </lineage>
</organism>
<reference key="1">
    <citation type="journal article" date="2005" name="FEMS Microbiol. Lett.">
        <title>The Rhizobium etli bioMNY operon is involved in biotin transport.</title>
        <authorList>
            <person name="Guillen-Navarro K."/>
            <person name="Araiza G."/>
            <person name="Garcia-de los Santos A."/>
            <person name="Mora Y."/>
            <person name="Dunn M.F."/>
        </authorList>
    </citation>
    <scope>NUCLEOTIDE SEQUENCE [GENOMIC DNA]</scope>
    <scope>FUNCTION</scope>
    <scope>SUBUNIT</scope>
    <scope>INDUCTION</scope>
    <source>
        <strain>CE3</strain>
    </source>
</reference>
<reference key="2">
    <citation type="journal article" date="2006" name="Proc. Natl. Acad. Sci. U.S.A.">
        <title>The partitioned Rhizobium etli genome: genetic and metabolic redundancy in seven interacting replicons.</title>
        <authorList>
            <person name="Gonzalez V."/>
            <person name="Santamaria R.I."/>
            <person name="Bustos P."/>
            <person name="Hernandez-Gonzalez I."/>
            <person name="Medrano-Soto A."/>
            <person name="Moreno-Hagelsieb G."/>
            <person name="Janga S.C."/>
            <person name="Ramirez M.A."/>
            <person name="Jimenez-Jacinto V."/>
            <person name="Collado-Vides J."/>
            <person name="Davila G."/>
        </authorList>
    </citation>
    <scope>NUCLEOTIDE SEQUENCE [LARGE SCALE GENOMIC DNA]</scope>
    <source>
        <strain>ATCC 51251 / DSM 11541 / JCM 21823 / NBRC 15573 / CFN 42</strain>
    </source>
</reference>
<sequence>MNIQFESAGVSFGARVALEPLTLAITGKRIGVIGLNGSGKTTFARLINGLTKPTTGRVIVNGRDTADEKTVVTDVGFIFQSPQNQIILPIVKDDIAFGLKRRGLSKAEIEARVEGVLARFGAEALADRRAHELSGGELQVAALCSVLATGPGILILDEPTNQLDLKNRALVERIIAGLPESAIVITHDLELIAGFERVLVFHEGRLAADEPAAEAIARYREIAA</sequence>
<name>BIOM_RHIEC</name>
<evidence type="ECO:0000255" key="1">
    <source>
        <dbReference type="PROSITE-ProRule" id="PRU00434"/>
    </source>
</evidence>
<evidence type="ECO:0000269" key="2">
    <source>
    </source>
</evidence>
<evidence type="ECO:0000305" key="3"/>
<evidence type="ECO:0000305" key="4">
    <source>
    </source>
</evidence>
<protein>
    <recommendedName>
        <fullName>Biotin transport ATP-binding protein BioM</fullName>
        <ecNumber>7.6.2.-</ecNumber>
    </recommendedName>
    <alternativeName>
        <fullName>Biotin ECF transporter A component BioM</fullName>
    </alternativeName>
</protein>
<feature type="chain" id="PRO_0000416408" description="Biotin transport ATP-binding protein BioM">
    <location>
        <begin position="1"/>
        <end position="224"/>
    </location>
</feature>
<feature type="domain" description="ABC transporter" evidence="1">
    <location>
        <begin position="3"/>
        <end position="224"/>
    </location>
</feature>
<feature type="binding site" evidence="1">
    <location>
        <begin position="34"/>
        <end position="41"/>
    </location>
    <ligand>
        <name>ATP</name>
        <dbReference type="ChEBI" id="CHEBI:30616"/>
    </ligand>
</feature>
<feature type="sequence conflict" description="In Ref. 1; AAT52196." evidence="3" ref="1">
    <original>I</original>
    <variation>V</variation>
    <location>
        <position position="47"/>
    </location>
</feature>
<feature type="sequence conflict" description="In Ref. 1; AAT52196." evidence="3" ref="1">
    <original>RDTADEKTVVTDVGFIFQSP</original>
    <variation>PSIRPTRRRLSPHVGLHLSSRE</variation>
    <location>
        <begin position="63"/>
        <end position="82"/>
    </location>
</feature>
<feature type="sequence conflict" description="In Ref. 1; AAT52196." evidence="3" ref="1">
    <original>D</original>
    <variation>Y</variation>
    <location>
        <position position="93"/>
    </location>
</feature>
<feature type="sequence conflict" description="In Ref. 1; AAT52196." evidence="3" ref="1">
    <original>L</original>
    <variation>A</variation>
    <location>
        <position position="133"/>
    </location>
</feature>
<comment type="function">
    <text evidence="4">Involved in biotin uptake.</text>
</comment>
<comment type="subunit">
    <text evidence="4">Part of a biotin transporter complex composed of BioM, BioN and BioY.</text>
</comment>
<comment type="subcellular location">
    <subcellularLocation>
        <location evidence="3">Cell inner membrane</location>
        <topology evidence="3">Peripheral membrane protein</topology>
    </subcellularLocation>
</comment>
<comment type="induction">
    <text evidence="2">Expression is repressed by biotin.</text>
</comment>
<comment type="similarity">
    <text evidence="3">Belongs to the ABC transporter superfamily.</text>
</comment>
<keyword id="KW-0067">ATP-binding</keyword>
<keyword id="KW-0997">Cell inner membrane</keyword>
<keyword id="KW-1003">Cell membrane</keyword>
<keyword id="KW-0472">Membrane</keyword>
<keyword id="KW-0547">Nucleotide-binding</keyword>
<keyword id="KW-1185">Reference proteome</keyword>
<keyword id="KW-1278">Translocase</keyword>
<keyword id="KW-0813">Transport</keyword>
<dbReference type="EC" id="7.6.2.-"/>
<dbReference type="EMBL" id="AY644481">
    <property type="protein sequence ID" value="AAT52196.1"/>
    <property type="molecule type" value="Genomic_DNA"/>
</dbReference>
<dbReference type="EMBL" id="CP000133">
    <property type="protein sequence ID" value="ABC89741.1"/>
    <property type="molecule type" value="Genomic_DNA"/>
</dbReference>
<dbReference type="RefSeq" id="WP_011424277.1">
    <property type="nucleotide sequence ID" value="NC_007761.1"/>
</dbReference>
<dbReference type="SMR" id="Q2KBP5"/>
<dbReference type="TCDB" id="3.A.1.25.1">
    <property type="family name" value="the atp-binding cassette (abc) superfamily"/>
</dbReference>
<dbReference type="KEGG" id="ret:RHE_CH00930"/>
<dbReference type="eggNOG" id="COG1122">
    <property type="taxonomic scope" value="Bacteria"/>
</dbReference>
<dbReference type="HOGENOM" id="CLU_000604_1_22_5"/>
<dbReference type="OrthoDB" id="9782163at2"/>
<dbReference type="Proteomes" id="UP000001936">
    <property type="component" value="Chromosome"/>
</dbReference>
<dbReference type="GO" id="GO:0043190">
    <property type="term" value="C:ATP-binding cassette (ABC) transporter complex"/>
    <property type="evidence" value="ECO:0007669"/>
    <property type="project" value="TreeGrafter"/>
</dbReference>
<dbReference type="GO" id="GO:0005524">
    <property type="term" value="F:ATP binding"/>
    <property type="evidence" value="ECO:0007669"/>
    <property type="project" value="UniProtKB-KW"/>
</dbReference>
<dbReference type="GO" id="GO:0016887">
    <property type="term" value="F:ATP hydrolysis activity"/>
    <property type="evidence" value="ECO:0007669"/>
    <property type="project" value="InterPro"/>
</dbReference>
<dbReference type="GO" id="GO:0042626">
    <property type="term" value="F:ATPase-coupled transmembrane transporter activity"/>
    <property type="evidence" value="ECO:0007669"/>
    <property type="project" value="TreeGrafter"/>
</dbReference>
<dbReference type="CDD" id="cd03225">
    <property type="entry name" value="ABC_cobalt_CbiO_domain1"/>
    <property type="match status" value="1"/>
</dbReference>
<dbReference type="Gene3D" id="3.40.50.300">
    <property type="entry name" value="P-loop containing nucleotide triphosphate hydrolases"/>
    <property type="match status" value="1"/>
</dbReference>
<dbReference type="InterPro" id="IPR003593">
    <property type="entry name" value="AAA+_ATPase"/>
</dbReference>
<dbReference type="InterPro" id="IPR003439">
    <property type="entry name" value="ABC_transporter-like_ATP-bd"/>
</dbReference>
<dbReference type="InterPro" id="IPR017871">
    <property type="entry name" value="ABC_transporter-like_CS"/>
</dbReference>
<dbReference type="InterPro" id="IPR015856">
    <property type="entry name" value="ABC_transpr_CbiO/EcfA_su"/>
</dbReference>
<dbReference type="InterPro" id="IPR050095">
    <property type="entry name" value="ECF_ABC_transporter_ATP-bd"/>
</dbReference>
<dbReference type="InterPro" id="IPR027417">
    <property type="entry name" value="P-loop_NTPase"/>
</dbReference>
<dbReference type="PANTHER" id="PTHR43553:SF24">
    <property type="entry name" value="ENERGY-COUPLING FACTOR TRANSPORTER ATP-BINDING PROTEIN ECFA1"/>
    <property type="match status" value="1"/>
</dbReference>
<dbReference type="PANTHER" id="PTHR43553">
    <property type="entry name" value="HEAVY METAL TRANSPORTER"/>
    <property type="match status" value="1"/>
</dbReference>
<dbReference type="Pfam" id="PF00005">
    <property type="entry name" value="ABC_tran"/>
    <property type="match status" value="1"/>
</dbReference>
<dbReference type="SMART" id="SM00382">
    <property type="entry name" value="AAA"/>
    <property type="match status" value="1"/>
</dbReference>
<dbReference type="SUPFAM" id="SSF52540">
    <property type="entry name" value="P-loop containing nucleoside triphosphate hydrolases"/>
    <property type="match status" value="1"/>
</dbReference>
<dbReference type="PROSITE" id="PS00211">
    <property type="entry name" value="ABC_TRANSPORTER_1"/>
    <property type="match status" value="1"/>
</dbReference>
<dbReference type="PROSITE" id="PS50893">
    <property type="entry name" value="ABC_TRANSPORTER_2"/>
    <property type="match status" value="1"/>
</dbReference>
<accession>Q2KBP5</accession>
<accession>Q6GUB2</accession>
<gene>
    <name type="primary">bioM</name>
    <name type="ordered locus">RHE_CH00930</name>
</gene>
<proteinExistence type="evidence at protein level"/>